<feature type="chain" id="PRO_0000136285" description="Histidine--tRNA ligase">
    <location>
        <begin position="1"/>
        <end position="448"/>
    </location>
</feature>
<name>SYH_TREDE</name>
<organism>
    <name type="scientific">Treponema denticola (strain ATCC 35405 / DSM 14222 / CIP 103919 / JCM 8153 / KCTC 15104)</name>
    <dbReference type="NCBI Taxonomy" id="243275"/>
    <lineage>
        <taxon>Bacteria</taxon>
        <taxon>Pseudomonadati</taxon>
        <taxon>Spirochaetota</taxon>
        <taxon>Spirochaetia</taxon>
        <taxon>Spirochaetales</taxon>
        <taxon>Treponemataceae</taxon>
        <taxon>Treponema</taxon>
    </lineage>
</organism>
<sequence length="448" mass="51014">MSDLIQPKVLKGFRDFLPADEIERALLMERLVKVFRDYGFVPIDTPALEYSEILLRKSGGETEKQVFRFSDNGGRDVAMRFDLTVPLARFVAEHKSEIYFPFKRYHLGKVWRGEKPQAGRYREFLQCDFDTLGSDSAAVDFEILRLIKKALNELGVSNFKIHVSHRGIFNRFLKSLNLSEDSEEVLRIVDKLAKIGEDEVLKLLTDISSEESAKKILAYISGVSKELKSEDFEKTLSHLENLAGGPDEDTKRMRDIYALVKAVGIEDSIVFDPSITRGLDYYTGVVFETFLNDLPSIGSVCSGGRYDNLTALYMKECITGVGASIGLDRLLAALELLGHQKTKASFTDLLIFSLPEDDLVLSYKIVNFFEAEKINAEVYPEPKKMNHQYTYAEKKDIRWGLFLDKDSCVEEFDKAPQRFKIKLKDMTNRTEDETPLSEAVKKIRASKN</sequence>
<accession>P60920</accession>
<reference key="1">
    <citation type="journal article" date="2004" name="Proc. Natl. Acad. Sci. U.S.A.">
        <title>Comparison of the genome of the oral pathogen Treponema denticola with other spirochete genomes.</title>
        <authorList>
            <person name="Seshadri R."/>
            <person name="Myers G.S.A."/>
            <person name="Tettelin H."/>
            <person name="Eisen J.A."/>
            <person name="Heidelberg J.F."/>
            <person name="Dodson R.J."/>
            <person name="Davidsen T.M."/>
            <person name="DeBoy R.T."/>
            <person name="Fouts D.E."/>
            <person name="Haft D.H."/>
            <person name="Selengut J."/>
            <person name="Ren Q."/>
            <person name="Brinkac L.M."/>
            <person name="Madupu R."/>
            <person name="Kolonay J.F."/>
            <person name="Durkin S.A."/>
            <person name="Daugherty S.C."/>
            <person name="Shetty J."/>
            <person name="Shvartsbeyn A."/>
            <person name="Gebregeorgis E."/>
            <person name="Geer K."/>
            <person name="Tsegaye G."/>
            <person name="Malek J.A."/>
            <person name="Ayodeji B."/>
            <person name="Shatsman S."/>
            <person name="McLeod M.P."/>
            <person name="Smajs D."/>
            <person name="Howell J.K."/>
            <person name="Pal S."/>
            <person name="Amin A."/>
            <person name="Vashisth P."/>
            <person name="McNeill T.Z."/>
            <person name="Xiang Q."/>
            <person name="Sodergren E."/>
            <person name="Baca E."/>
            <person name="Weinstock G.M."/>
            <person name="Norris S.J."/>
            <person name="Fraser C.M."/>
            <person name="Paulsen I.T."/>
        </authorList>
    </citation>
    <scope>NUCLEOTIDE SEQUENCE [LARGE SCALE GENOMIC DNA]</scope>
    <source>
        <strain>ATCC 35405 / DSM 14222 / CIP 103919 / JCM 8153 / KCTC 15104</strain>
    </source>
</reference>
<gene>
    <name evidence="1" type="primary">hisS</name>
    <name type="ordered locus">TDE_1442</name>
</gene>
<comment type="catalytic activity">
    <reaction evidence="1">
        <text>tRNA(His) + L-histidine + ATP = L-histidyl-tRNA(His) + AMP + diphosphate + H(+)</text>
        <dbReference type="Rhea" id="RHEA:17313"/>
        <dbReference type="Rhea" id="RHEA-COMP:9665"/>
        <dbReference type="Rhea" id="RHEA-COMP:9689"/>
        <dbReference type="ChEBI" id="CHEBI:15378"/>
        <dbReference type="ChEBI" id="CHEBI:30616"/>
        <dbReference type="ChEBI" id="CHEBI:33019"/>
        <dbReference type="ChEBI" id="CHEBI:57595"/>
        <dbReference type="ChEBI" id="CHEBI:78442"/>
        <dbReference type="ChEBI" id="CHEBI:78527"/>
        <dbReference type="ChEBI" id="CHEBI:456215"/>
        <dbReference type="EC" id="6.1.1.21"/>
    </reaction>
</comment>
<comment type="subunit">
    <text evidence="1">Homodimer.</text>
</comment>
<comment type="subcellular location">
    <subcellularLocation>
        <location evidence="1">Cytoplasm</location>
    </subcellularLocation>
</comment>
<comment type="similarity">
    <text evidence="1">Belongs to the class-II aminoacyl-tRNA synthetase family.</text>
</comment>
<evidence type="ECO:0000255" key="1">
    <source>
        <dbReference type="HAMAP-Rule" id="MF_00127"/>
    </source>
</evidence>
<dbReference type="EC" id="6.1.1.21" evidence="1"/>
<dbReference type="EMBL" id="AE017226">
    <property type="protein sequence ID" value="AAS11959.1"/>
    <property type="molecule type" value="Genomic_DNA"/>
</dbReference>
<dbReference type="RefSeq" id="NP_972048.1">
    <property type="nucleotide sequence ID" value="NC_002967.9"/>
</dbReference>
<dbReference type="RefSeq" id="WP_002679075.1">
    <property type="nucleotide sequence ID" value="NC_002967.9"/>
</dbReference>
<dbReference type="SMR" id="P60920"/>
<dbReference type="STRING" id="243275.TDE_1442"/>
<dbReference type="PaxDb" id="243275-TDE_1442"/>
<dbReference type="GeneID" id="2741405"/>
<dbReference type="KEGG" id="tde:TDE_1442"/>
<dbReference type="PATRIC" id="fig|243275.7.peg.1383"/>
<dbReference type="eggNOG" id="COG0124">
    <property type="taxonomic scope" value="Bacteria"/>
</dbReference>
<dbReference type="HOGENOM" id="CLU_025113_3_0_12"/>
<dbReference type="OrthoDB" id="9800814at2"/>
<dbReference type="Proteomes" id="UP000008212">
    <property type="component" value="Chromosome"/>
</dbReference>
<dbReference type="GO" id="GO:0005737">
    <property type="term" value="C:cytoplasm"/>
    <property type="evidence" value="ECO:0007669"/>
    <property type="project" value="UniProtKB-SubCell"/>
</dbReference>
<dbReference type="GO" id="GO:0005524">
    <property type="term" value="F:ATP binding"/>
    <property type="evidence" value="ECO:0007669"/>
    <property type="project" value="UniProtKB-UniRule"/>
</dbReference>
<dbReference type="GO" id="GO:0004821">
    <property type="term" value="F:histidine-tRNA ligase activity"/>
    <property type="evidence" value="ECO:0007669"/>
    <property type="project" value="UniProtKB-UniRule"/>
</dbReference>
<dbReference type="GO" id="GO:0006427">
    <property type="term" value="P:histidyl-tRNA aminoacylation"/>
    <property type="evidence" value="ECO:0007669"/>
    <property type="project" value="UniProtKB-UniRule"/>
</dbReference>
<dbReference type="CDD" id="cd00773">
    <property type="entry name" value="HisRS-like_core"/>
    <property type="match status" value="1"/>
</dbReference>
<dbReference type="Gene3D" id="3.40.50.800">
    <property type="entry name" value="Anticodon-binding domain"/>
    <property type="match status" value="1"/>
</dbReference>
<dbReference type="Gene3D" id="3.30.930.10">
    <property type="entry name" value="Bira Bifunctional Protein, Domain 2"/>
    <property type="match status" value="1"/>
</dbReference>
<dbReference type="HAMAP" id="MF_00127">
    <property type="entry name" value="His_tRNA_synth"/>
    <property type="match status" value="1"/>
</dbReference>
<dbReference type="InterPro" id="IPR006195">
    <property type="entry name" value="aa-tRNA-synth_II"/>
</dbReference>
<dbReference type="InterPro" id="IPR045864">
    <property type="entry name" value="aa-tRNA-synth_II/BPL/LPL"/>
</dbReference>
<dbReference type="InterPro" id="IPR036621">
    <property type="entry name" value="Anticodon-bd_dom_sf"/>
</dbReference>
<dbReference type="InterPro" id="IPR015807">
    <property type="entry name" value="His-tRNA-ligase"/>
</dbReference>
<dbReference type="InterPro" id="IPR041715">
    <property type="entry name" value="HisRS-like_core"/>
</dbReference>
<dbReference type="InterPro" id="IPR004516">
    <property type="entry name" value="HisRS/HisZ"/>
</dbReference>
<dbReference type="NCBIfam" id="TIGR00442">
    <property type="entry name" value="hisS"/>
    <property type="match status" value="1"/>
</dbReference>
<dbReference type="PANTHER" id="PTHR11476:SF7">
    <property type="entry name" value="HISTIDINE--TRNA LIGASE"/>
    <property type="match status" value="1"/>
</dbReference>
<dbReference type="PANTHER" id="PTHR11476">
    <property type="entry name" value="HISTIDYL-TRNA SYNTHETASE"/>
    <property type="match status" value="1"/>
</dbReference>
<dbReference type="Pfam" id="PF13393">
    <property type="entry name" value="tRNA-synt_His"/>
    <property type="match status" value="1"/>
</dbReference>
<dbReference type="PIRSF" id="PIRSF001549">
    <property type="entry name" value="His-tRNA_synth"/>
    <property type="match status" value="1"/>
</dbReference>
<dbReference type="SUPFAM" id="SSF52954">
    <property type="entry name" value="Class II aaRS ABD-related"/>
    <property type="match status" value="1"/>
</dbReference>
<dbReference type="SUPFAM" id="SSF55681">
    <property type="entry name" value="Class II aaRS and biotin synthetases"/>
    <property type="match status" value="1"/>
</dbReference>
<dbReference type="PROSITE" id="PS50862">
    <property type="entry name" value="AA_TRNA_LIGASE_II"/>
    <property type="match status" value="1"/>
</dbReference>
<proteinExistence type="inferred from homology"/>
<keyword id="KW-0030">Aminoacyl-tRNA synthetase</keyword>
<keyword id="KW-0067">ATP-binding</keyword>
<keyword id="KW-0963">Cytoplasm</keyword>
<keyword id="KW-0436">Ligase</keyword>
<keyword id="KW-0547">Nucleotide-binding</keyword>
<keyword id="KW-0648">Protein biosynthesis</keyword>
<keyword id="KW-1185">Reference proteome</keyword>
<protein>
    <recommendedName>
        <fullName evidence="1">Histidine--tRNA ligase</fullName>
        <ecNumber evidence="1">6.1.1.21</ecNumber>
    </recommendedName>
    <alternativeName>
        <fullName evidence="1">Histidyl-tRNA synthetase</fullName>
        <shortName evidence="1">HisRS</shortName>
    </alternativeName>
</protein>